<accession>Q0VQ89</accession>
<name>CLPX_ALCBS</name>
<sequence>MTDSTGKGDDGKLLYCSFCGKSQHEVRKLIAGPSVFICDECVDLCNDIIREEVQEDTSETDGERLPKPNEIKDTLDEYVIGQERAKKVLAVAVYNHYKRLRSGGKGRDEVELGKSNILLIGPTGSGKTLLAETLARMLNVPFTIADATTLTEAGYVGEDVENIIQKLLQKCDYDVDKAQRGIVYIDEIDKISRKSDNPSITRDVSGEGVQQALLKLIEGTVASVPPQGGRKHPQQEFLQVDTSNMLFICGGAFAGLDKVIRERSEKGGIGFSAEVKSKDNTRNLGELLVDVEPEDLVKYGLIPEFIGRLPVIATLEELSEDALIQILTEPRNALTKQYARLFEMEGVELDFREDALKAIANKAMVRKTGARGLRSILESVLLDTMYQVPSMESVAKVVIDSPTIKGESEPLLIYENNEQSSKVAPD</sequence>
<keyword id="KW-0067">ATP-binding</keyword>
<keyword id="KW-0143">Chaperone</keyword>
<keyword id="KW-0479">Metal-binding</keyword>
<keyword id="KW-0547">Nucleotide-binding</keyword>
<keyword id="KW-1185">Reference proteome</keyword>
<keyword id="KW-0862">Zinc</keyword>
<protein>
    <recommendedName>
        <fullName evidence="1">ATP-dependent Clp protease ATP-binding subunit ClpX</fullName>
    </recommendedName>
</protein>
<organism>
    <name type="scientific">Alcanivorax borkumensis (strain ATCC 700651 / DSM 11573 / NCIMB 13689 / SK2)</name>
    <dbReference type="NCBI Taxonomy" id="393595"/>
    <lineage>
        <taxon>Bacteria</taxon>
        <taxon>Pseudomonadati</taxon>
        <taxon>Pseudomonadota</taxon>
        <taxon>Gammaproteobacteria</taxon>
        <taxon>Oceanospirillales</taxon>
        <taxon>Alcanivoracaceae</taxon>
        <taxon>Alcanivorax</taxon>
    </lineage>
</organism>
<reference key="1">
    <citation type="journal article" date="2006" name="Nat. Biotechnol.">
        <title>Genome sequence of the ubiquitous hydrocarbon-degrading marine bacterium Alcanivorax borkumensis.</title>
        <authorList>
            <person name="Schneiker S."/>
            <person name="Martins dos Santos V.A.P."/>
            <person name="Bartels D."/>
            <person name="Bekel T."/>
            <person name="Brecht M."/>
            <person name="Buhrmester J."/>
            <person name="Chernikova T.N."/>
            <person name="Denaro R."/>
            <person name="Ferrer M."/>
            <person name="Gertler C."/>
            <person name="Goesmann A."/>
            <person name="Golyshina O.V."/>
            <person name="Kaminski F."/>
            <person name="Khachane A.N."/>
            <person name="Lang S."/>
            <person name="Linke B."/>
            <person name="McHardy A.C."/>
            <person name="Meyer F."/>
            <person name="Nechitaylo T."/>
            <person name="Puehler A."/>
            <person name="Regenhardt D."/>
            <person name="Rupp O."/>
            <person name="Sabirova J.S."/>
            <person name="Selbitschka W."/>
            <person name="Yakimov M.M."/>
            <person name="Timmis K.N."/>
            <person name="Vorhoelter F.-J."/>
            <person name="Weidner S."/>
            <person name="Kaiser O."/>
            <person name="Golyshin P.N."/>
        </authorList>
    </citation>
    <scope>NUCLEOTIDE SEQUENCE [LARGE SCALE GENOMIC DNA]</scope>
    <source>
        <strain>ATCC 700651 / DSM 11573 / NCIMB 13689 / SK2</strain>
    </source>
</reference>
<dbReference type="EMBL" id="AM286690">
    <property type="protein sequence ID" value="CAL16659.1"/>
    <property type="molecule type" value="Genomic_DNA"/>
</dbReference>
<dbReference type="RefSeq" id="WP_011588494.1">
    <property type="nucleotide sequence ID" value="NC_008260.1"/>
</dbReference>
<dbReference type="SMR" id="Q0VQ89"/>
<dbReference type="STRING" id="393595.ABO_1211"/>
<dbReference type="KEGG" id="abo:ABO_1211"/>
<dbReference type="eggNOG" id="COG1219">
    <property type="taxonomic scope" value="Bacteria"/>
</dbReference>
<dbReference type="HOGENOM" id="CLU_014218_8_2_6"/>
<dbReference type="OrthoDB" id="9804062at2"/>
<dbReference type="Proteomes" id="UP000008871">
    <property type="component" value="Chromosome"/>
</dbReference>
<dbReference type="GO" id="GO:0009376">
    <property type="term" value="C:HslUV protease complex"/>
    <property type="evidence" value="ECO:0007669"/>
    <property type="project" value="TreeGrafter"/>
</dbReference>
<dbReference type="GO" id="GO:0005524">
    <property type="term" value="F:ATP binding"/>
    <property type="evidence" value="ECO:0007669"/>
    <property type="project" value="UniProtKB-UniRule"/>
</dbReference>
<dbReference type="GO" id="GO:0016887">
    <property type="term" value="F:ATP hydrolysis activity"/>
    <property type="evidence" value="ECO:0007669"/>
    <property type="project" value="InterPro"/>
</dbReference>
<dbReference type="GO" id="GO:0140662">
    <property type="term" value="F:ATP-dependent protein folding chaperone"/>
    <property type="evidence" value="ECO:0007669"/>
    <property type="project" value="InterPro"/>
</dbReference>
<dbReference type="GO" id="GO:0046983">
    <property type="term" value="F:protein dimerization activity"/>
    <property type="evidence" value="ECO:0007669"/>
    <property type="project" value="InterPro"/>
</dbReference>
<dbReference type="GO" id="GO:0051082">
    <property type="term" value="F:unfolded protein binding"/>
    <property type="evidence" value="ECO:0007669"/>
    <property type="project" value="UniProtKB-UniRule"/>
</dbReference>
<dbReference type="GO" id="GO:0008270">
    <property type="term" value="F:zinc ion binding"/>
    <property type="evidence" value="ECO:0007669"/>
    <property type="project" value="InterPro"/>
</dbReference>
<dbReference type="GO" id="GO:0051301">
    <property type="term" value="P:cell division"/>
    <property type="evidence" value="ECO:0007669"/>
    <property type="project" value="TreeGrafter"/>
</dbReference>
<dbReference type="GO" id="GO:0051603">
    <property type="term" value="P:proteolysis involved in protein catabolic process"/>
    <property type="evidence" value="ECO:0007669"/>
    <property type="project" value="TreeGrafter"/>
</dbReference>
<dbReference type="CDD" id="cd19497">
    <property type="entry name" value="RecA-like_ClpX"/>
    <property type="match status" value="1"/>
</dbReference>
<dbReference type="FunFam" id="1.10.8.60:FF:000002">
    <property type="entry name" value="ATP-dependent Clp protease ATP-binding subunit ClpX"/>
    <property type="match status" value="1"/>
</dbReference>
<dbReference type="FunFam" id="3.40.50.300:FF:000005">
    <property type="entry name" value="ATP-dependent Clp protease ATP-binding subunit ClpX"/>
    <property type="match status" value="1"/>
</dbReference>
<dbReference type="Gene3D" id="1.10.8.60">
    <property type="match status" value="1"/>
</dbReference>
<dbReference type="Gene3D" id="6.20.220.10">
    <property type="entry name" value="ClpX chaperone, C4-type zinc finger domain"/>
    <property type="match status" value="1"/>
</dbReference>
<dbReference type="Gene3D" id="3.40.50.300">
    <property type="entry name" value="P-loop containing nucleotide triphosphate hydrolases"/>
    <property type="match status" value="1"/>
</dbReference>
<dbReference type="HAMAP" id="MF_00175">
    <property type="entry name" value="ClpX"/>
    <property type="match status" value="1"/>
</dbReference>
<dbReference type="InterPro" id="IPR003593">
    <property type="entry name" value="AAA+_ATPase"/>
</dbReference>
<dbReference type="InterPro" id="IPR050052">
    <property type="entry name" value="ATP-dep_Clp_protease_ClpX"/>
</dbReference>
<dbReference type="InterPro" id="IPR003959">
    <property type="entry name" value="ATPase_AAA_core"/>
</dbReference>
<dbReference type="InterPro" id="IPR019489">
    <property type="entry name" value="Clp_ATPase_C"/>
</dbReference>
<dbReference type="InterPro" id="IPR004487">
    <property type="entry name" value="Clp_protease_ATP-bd_su_ClpX"/>
</dbReference>
<dbReference type="InterPro" id="IPR046425">
    <property type="entry name" value="ClpX_bact"/>
</dbReference>
<dbReference type="InterPro" id="IPR027417">
    <property type="entry name" value="P-loop_NTPase"/>
</dbReference>
<dbReference type="InterPro" id="IPR010603">
    <property type="entry name" value="Znf_CppX_C4"/>
</dbReference>
<dbReference type="InterPro" id="IPR038366">
    <property type="entry name" value="Znf_CppX_C4_sf"/>
</dbReference>
<dbReference type="NCBIfam" id="TIGR00382">
    <property type="entry name" value="clpX"/>
    <property type="match status" value="1"/>
</dbReference>
<dbReference type="NCBIfam" id="NF003745">
    <property type="entry name" value="PRK05342.1"/>
    <property type="match status" value="1"/>
</dbReference>
<dbReference type="PANTHER" id="PTHR48102:SF7">
    <property type="entry name" value="ATP-DEPENDENT CLP PROTEASE ATP-BINDING SUBUNIT CLPX-LIKE, MITOCHONDRIAL"/>
    <property type="match status" value="1"/>
</dbReference>
<dbReference type="PANTHER" id="PTHR48102">
    <property type="entry name" value="ATP-DEPENDENT CLP PROTEASE ATP-BINDING SUBUNIT CLPX-LIKE, MITOCHONDRIAL-RELATED"/>
    <property type="match status" value="1"/>
</dbReference>
<dbReference type="Pfam" id="PF07724">
    <property type="entry name" value="AAA_2"/>
    <property type="match status" value="1"/>
</dbReference>
<dbReference type="Pfam" id="PF10431">
    <property type="entry name" value="ClpB_D2-small"/>
    <property type="match status" value="1"/>
</dbReference>
<dbReference type="Pfam" id="PF06689">
    <property type="entry name" value="zf-C4_ClpX"/>
    <property type="match status" value="1"/>
</dbReference>
<dbReference type="SMART" id="SM00382">
    <property type="entry name" value="AAA"/>
    <property type="match status" value="1"/>
</dbReference>
<dbReference type="SMART" id="SM01086">
    <property type="entry name" value="ClpB_D2-small"/>
    <property type="match status" value="1"/>
</dbReference>
<dbReference type="SMART" id="SM00994">
    <property type="entry name" value="zf-C4_ClpX"/>
    <property type="match status" value="1"/>
</dbReference>
<dbReference type="SUPFAM" id="SSF57716">
    <property type="entry name" value="Glucocorticoid receptor-like (DNA-binding domain)"/>
    <property type="match status" value="1"/>
</dbReference>
<dbReference type="SUPFAM" id="SSF52540">
    <property type="entry name" value="P-loop containing nucleoside triphosphate hydrolases"/>
    <property type="match status" value="1"/>
</dbReference>
<dbReference type="PROSITE" id="PS51902">
    <property type="entry name" value="CLPX_ZB"/>
    <property type="match status" value="1"/>
</dbReference>
<comment type="function">
    <text evidence="1">ATP-dependent specificity component of the Clp protease. It directs the protease to specific substrates. Can perform chaperone functions in the absence of ClpP.</text>
</comment>
<comment type="subunit">
    <text evidence="1">Component of the ClpX-ClpP complex. Forms a hexameric ring that, in the presence of ATP, binds to fourteen ClpP subunits assembled into a disk-like structure with a central cavity, resembling the structure of eukaryotic proteasomes.</text>
</comment>
<comment type="similarity">
    <text evidence="1">Belongs to the ClpX chaperone family.</text>
</comment>
<proteinExistence type="inferred from homology"/>
<evidence type="ECO:0000255" key="1">
    <source>
        <dbReference type="HAMAP-Rule" id="MF_00175"/>
    </source>
</evidence>
<evidence type="ECO:0000255" key="2">
    <source>
        <dbReference type="PROSITE-ProRule" id="PRU01250"/>
    </source>
</evidence>
<feature type="chain" id="PRO_1000024509" description="ATP-dependent Clp protease ATP-binding subunit ClpX">
    <location>
        <begin position="1"/>
        <end position="426"/>
    </location>
</feature>
<feature type="domain" description="ClpX-type ZB" evidence="2">
    <location>
        <begin position="4"/>
        <end position="57"/>
    </location>
</feature>
<feature type="binding site" evidence="2">
    <location>
        <position position="16"/>
    </location>
    <ligand>
        <name>Zn(2+)</name>
        <dbReference type="ChEBI" id="CHEBI:29105"/>
    </ligand>
</feature>
<feature type="binding site" evidence="2">
    <location>
        <position position="19"/>
    </location>
    <ligand>
        <name>Zn(2+)</name>
        <dbReference type="ChEBI" id="CHEBI:29105"/>
    </ligand>
</feature>
<feature type="binding site" evidence="2">
    <location>
        <position position="38"/>
    </location>
    <ligand>
        <name>Zn(2+)</name>
        <dbReference type="ChEBI" id="CHEBI:29105"/>
    </ligand>
</feature>
<feature type="binding site" evidence="2">
    <location>
        <position position="41"/>
    </location>
    <ligand>
        <name>Zn(2+)</name>
        <dbReference type="ChEBI" id="CHEBI:29105"/>
    </ligand>
</feature>
<feature type="binding site" evidence="1">
    <location>
        <begin position="122"/>
        <end position="129"/>
    </location>
    <ligand>
        <name>ATP</name>
        <dbReference type="ChEBI" id="CHEBI:30616"/>
    </ligand>
</feature>
<gene>
    <name evidence="1" type="primary">clpX</name>
    <name type="ordered locus">ABO_1211</name>
</gene>